<name>RDH7_MOUSE</name>
<keyword id="KW-0256">Endoplasmic reticulum</keyword>
<keyword id="KW-0492">Microsome</keyword>
<keyword id="KW-0520">NAD</keyword>
<keyword id="KW-0521">NADP</keyword>
<keyword id="KW-0560">Oxidoreductase</keyword>
<keyword id="KW-1185">Reference proteome</keyword>
<proteinExistence type="evidence at protein level"/>
<sequence>MWLYLVALVGLWTLLRFFRERQVVSHLQDKYVFITGCDSGFGNLLARQLDRRGMRVLAACLTEKGAEQLRNKTSDRLETVILDVTKTESIVAATQWVKERVGNRGLWGLVNNAGICVFAINEWLKKEDFANILDVNLLGMIEVTLSMLPLVRKARGRVVNISSSMGRVSLCGGGYCISKYGVEAFSDSLRREISYFGVKVAIIEPGGFRTNVSNYERLSHSIEKLWDQTSSEVKEVYDKNFLDSYIKAIQSLTDTCSDDLSVVTDCMEHALTACHPRTRYSAGWDAKLFYLPLSYMPTFLVDAMLYWSSVKPAQAL</sequence>
<protein>
    <recommendedName>
        <fullName>Retinol dehydrogenase 7</fullName>
        <ecNumber>1.1.1.105</ecNumber>
    </recommendedName>
    <alternativeName>
        <fullName>Cis-retinol/3alpha-hydroxysterol short-chain dehydrogenase isozyme 2</fullName>
    </alternativeName>
    <alternativeName>
        <fullName>Cis-retinol/androgen dehydrogenase type 2</fullName>
        <shortName>CRAD-2</shortName>
    </alternativeName>
</protein>
<dbReference type="EC" id="1.1.1.105"/>
<dbReference type="EMBL" id="AF056194">
    <property type="protein sequence ID" value="AAC40159.1"/>
    <property type="molecule type" value="mRNA"/>
</dbReference>
<dbReference type="EMBL" id="AB015165">
    <property type="protein sequence ID" value="BAB03717.1"/>
    <property type="molecule type" value="mRNA"/>
</dbReference>
<dbReference type="EMBL" id="AB032058">
    <property type="protein sequence ID" value="BAB03718.1"/>
    <property type="molecule type" value="mRNA"/>
</dbReference>
<dbReference type="EMBL" id="AB032057">
    <property type="protein sequence ID" value="BAB03719.1"/>
    <property type="molecule type" value="Genomic_DNA"/>
</dbReference>
<dbReference type="EMBL" id="BC024603">
    <property type="protein sequence ID" value="AAH24603.1"/>
    <property type="molecule type" value="mRNA"/>
</dbReference>
<dbReference type="EMBL" id="BC092255">
    <property type="protein sequence ID" value="AAH92255.1"/>
    <property type="molecule type" value="mRNA"/>
</dbReference>
<dbReference type="EMBL" id="BC093514">
    <property type="protein sequence ID" value="AAH93514.1"/>
    <property type="molecule type" value="mRNA"/>
</dbReference>
<dbReference type="CCDS" id="CCDS24255.1"/>
<dbReference type="RefSeq" id="NP_001144221.1">
    <property type="nucleotide sequence ID" value="NM_001150749.1"/>
</dbReference>
<dbReference type="RefSeq" id="NP_059501.1">
    <property type="nucleotide sequence ID" value="NM_017473.4"/>
</dbReference>
<dbReference type="SMR" id="O88451"/>
<dbReference type="FunCoup" id="O88451">
    <property type="interactions" value="462"/>
</dbReference>
<dbReference type="IntAct" id="O88451">
    <property type="interactions" value="1"/>
</dbReference>
<dbReference type="STRING" id="10090.ENSMUSP00000039252"/>
<dbReference type="GlyGen" id="O88451">
    <property type="glycosylation" value="1 site, 1 O-linked glycan (1 site)"/>
</dbReference>
<dbReference type="iPTMnet" id="O88451"/>
<dbReference type="PhosphoSitePlus" id="O88451"/>
<dbReference type="SwissPalm" id="O88451"/>
<dbReference type="jPOST" id="O88451"/>
<dbReference type="PaxDb" id="10090-ENSMUSP00000039252"/>
<dbReference type="PeptideAtlas" id="O88451"/>
<dbReference type="ProteomicsDB" id="253192"/>
<dbReference type="DNASU" id="54150"/>
<dbReference type="Ensembl" id="ENSMUST00000047199.5">
    <property type="protein sequence ID" value="ENSMUSP00000039252.5"/>
    <property type="gene ID" value="ENSMUSG00000040134.9"/>
</dbReference>
<dbReference type="GeneID" id="54150"/>
<dbReference type="KEGG" id="mmu:54150"/>
<dbReference type="UCSC" id="uc007hkv.2">
    <property type="organism name" value="mouse"/>
</dbReference>
<dbReference type="AGR" id="MGI:1860517"/>
<dbReference type="CTD" id="54150"/>
<dbReference type="MGI" id="MGI:1860517">
    <property type="gene designation" value="Rdh7"/>
</dbReference>
<dbReference type="VEuPathDB" id="HostDB:ENSMUSG00000040134"/>
<dbReference type="eggNOG" id="KOG1610">
    <property type="taxonomic scope" value="Eukaryota"/>
</dbReference>
<dbReference type="GeneTree" id="ENSGT00940000154118"/>
<dbReference type="HOGENOM" id="CLU_010194_2_0_1"/>
<dbReference type="InParanoid" id="O88451"/>
<dbReference type="OMA" id="FRREMYH"/>
<dbReference type="OrthoDB" id="5296at2759"/>
<dbReference type="PhylomeDB" id="O88451"/>
<dbReference type="TreeFam" id="TF325617"/>
<dbReference type="BRENDA" id="1.1.1.315">
    <property type="organism ID" value="3474"/>
</dbReference>
<dbReference type="UniPathway" id="UPA00912"/>
<dbReference type="BioGRID-ORCS" id="54150">
    <property type="hits" value="1 hit in 77 CRISPR screens"/>
</dbReference>
<dbReference type="ChiTaRS" id="Rdh7">
    <property type="organism name" value="mouse"/>
</dbReference>
<dbReference type="PRO" id="PR:O88451"/>
<dbReference type="Proteomes" id="UP000000589">
    <property type="component" value="Chromosome 10"/>
</dbReference>
<dbReference type="RNAct" id="O88451">
    <property type="molecule type" value="protein"/>
</dbReference>
<dbReference type="Bgee" id="ENSMUSG00000040134">
    <property type="expression patterns" value="Expressed in left lobe of liver and 40 other cell types or tissues"/>
</dbReference>
<dbReference type="GO" id="GO:0005783">
    <property type="term" value="C:endoplasmic reticulum"/>
    <property type="evidence" value="ECO:0007669"/>
    <property type="project" value="UniProtKB-SubCell"/>
</dbReference>
<dbReference type="GO" id="GO:0004745">
    <property type="term" value="F:all-trans-retinol dehydrogenase (NAD+) activity"/>
    <property type="evidence" value="ECO:0007669"/>
    <property type="project" value="UniProtKB-EC"/>
</dbReference>
<dbReference type="GO" id="GO:0003824">
    <property type="term" value="F:catalytic activity"/>
    <property type="evidence" value="ECO:0000250"/>
    <property type="project" value="MGI"/>
</dbReference>
<dbReference type="GO" id="GO:0042572">
    <property type="term" value="P:retinol metabolic process"/>
    <property type="evidence" value="ECO:0007669"/>
    <property type="project" value="UniProtKB-UniPathway"/>
</dbReference>
<dbReference type="CDD" id="cd09805">
    <property type="entry name" value="type2_17beta_HSD-like_SDR_c"/>
    <property type="match status" value="1"/>
</dbReference>
<dbReference type="FunFam" id="3.40.50.720:FF:000074">
    <property type="entry name" value="Retinol dehydrogenase type 1"/>
    <property type="match status" value="1"/>
</dbReference>
<dbReference type="Gene3D" id="3.40.50.720">
    <property type="entry name" value="NAD(P)-binding Rossmann-like Domain"/>
    <property type="match status" value="1"/>
</dbReference>
<dbReference type="InterPro" id="IPR036291">
    <property type="entry name" value="NAD(P)-bd_dom_sf"/>
</dbReference>
<dbReference type="InterPro" id="IPR020904">
    <property type="entry name" value="Sc_DH/Rdtase_CS"/>
</dbReference>
<dbReference type="InterPro" id="IPR002347">
    <property type="entry name" value="SDR_fam"/>
</dbReference>
<dbReference type="PANTHER" id="PTHR43313:SF11">
    <property type="entry name" value="RETINOL DEHYDROGENASE 16"/>
    <property type="match status" value="1"/>
</dbReference>
<dbReference type="PANTHER" id="PTHR43313">
    <property type="entry name" value="SHORT-CHAIN DEHYDROGENASE/REDUCTASE FAMILY 9C"/>
    <property type="match status" value="1"/>
</dbReference>
<dbReference type="Pfam" id="PF00106">
    <property type="entry name" value="adh_short"/>
    <property type="match status" value="1"/>
</dbReference>
<dbReference type="PRINTS" id="PR00081">
    <property type="entry name" value="GDHRDH"/>
</dbReference>
<dbReference type="PRINTS" id="PR00080">
    <property type="entry name" value="SDRFAMILY"/>
</dbReference>
<dbReference type="SUPFAM" id="SSF51735">
    <property type="entry name" value="NAD(P)-binding Rossmann-fold domains"/>
    <property type="match status" value="1"/>
</dbReference>
<dbReference type="PROSITE" id="PS00061">
    <property type="entry name" value="ADH_SHORT"/>
    <property type="match status" value="1"/>
</dbReference>
<gene>
    <name type="primary">Rdh7</name>
    <name type="synonym">Crad2</name>
</gene>
<comment type="function">
    <text evidence="3">Acts on androgens and retinols, i.e. has steroid 3-alpha- and 17-beta-dehydrogenase and cis/trans-retinol catalytic activities.</text>
</comment>
<comment type="catalytic activity">
    <reaction>
        <text>all-trans-retinol--[retinol-binding protein] + NAD(+) = all-trans-retinal--[retinol-binding protein] + NADH + H(+)</text>
        <dbReference type="Rhea" id="RHEA:48488"/>
        <dbReference type="Rhea" id="RHEA-COMP:14428"/>
        <dbReference type="Rhea" id="RHEA-COMP:14430"/>
        <dbReference type="ChEBI" id="CHEBI:15378"/>
        <dbReference type="ChEBI" id="CHEBI:17336"/>
        <dbReference type="ChEBI" id="CHEBI:17898"/>
        <dbReference type="ChEBI" id="CHEBI:57540"/>
        <dbReference type="ChEBI" id="CHEBI:57945"/>
        <dbReference type="ChEBI" id="CHEBI:83228"/>
        <dbReference type="EC" id="1.1.1.105"/>
    </reaction>
</comment>
<comment type="pathway">
    <text>Cofactor metabolism; retinol metabolism.</text>
</comment>
<comment type="subcellular location">
    <subcellularLocation>
        <location evidence="1">Microsome</location>
    </subcellularLocation>
    <subcellularLocation>
        <location evidence="1">Endoplasmic reticulum</location>
    </subcellularLocation>
</comment>
<comment type="tissue specificity">
    <text evidence="3">Highly expressed in liver. Also expressed in lung, eye, kidney, and brain.</text>
</comment>
<comment type="similarity">
    <text evidence="4">Belongs to the short-chain dehydrogenases/reductases (SDR) family.</text>
</comment>
<accession>O88451</accession>
<feature type="chain" id="PRO_0000054761" description="Retinol dehydrogenase 7">
    <location>
        <begin position="1"/>
        <end position="316"/>
    </location>
</feature>
<feature type="active site" description="Proton acceptor" evidence="2">
    <location>
        <position position="175"/>
    </location>
</feature>
<feature type="binding site" evidence="1">
    <location>
        <begin position="33"/>
        <end position="57"/>
    </location>
    <ligand>
        <name>NADP(+)</name>
        <dbReference type="ChEBI" id="CHEBI:58349"/>
    </ligand>
</feature>
<feature type="binding site" evidence="1">
    <location>
        <position position="163"/>
    </location>
    <ligand>
        <name>substrate</name>
    </ligand>
</feature>
<organism>
    <name type="scientific">Mus musculus</name>
    <name type="common">Mouse</name>
    <dbReference type="NCBI Taxonomy" id="10090"/>
    <lineage>
        <taxon>Eukaryota</taxon>
        <taxon>Metazoa</taxon>
        <taxon>Chordata</taxon>
        <taxon>Craniata</taxon>
        <taxon>Vertebrata</taxon>
        <taxon>Euteleostomi</taxon>
        <taxon>Mammalia</taxon>
        <taxon>Eutheria</taxon>
        <taxon>Euarchontoglires</taxon>
        <taxon>Glires</taxon>
        <taxon>Rodentia</taxon>
        <taxon>Myomorpha</taxon>
        <taxon>Muroidea</taxon>
        <taxon>Muridae</taxon>
        <taxon>Murinae</taxon>
        <taxon>Mus</taxon>
        <taxon>Mus</taxon>
    </lineage>
</organism>
<evidence type="ECO:0000250" key="1"/>
<evidence type="ECO:0000255" key="2">
    <source>
        <dbReference type="PROSITE-ProRule" id="PRU10001"/>
    </source>
</evidence>
<evidence type="ECO:0000269" key="3">
    <source>
    </source>
</evidence>
<evidence type="ECO:0000305" key="4"/>
<reference key="1">
    <citation type="journal article" date="1998" name="J. Biol. Chem.">
        <title>cDNA cloning, tissue distribution, and substrate characteristics of a cis-retinol/3alpha-hydroxysterol short-chain dehydrogenase isozyme.</title>
        <authorList>
            <person name="Su J."/>
            <person name="Chai X."/>
            <person name="Kahn B."/>
            <person name="Napoli J.L."/>
        </authorList>
    </citation>
    <scope>NUCLEOTIDE SEQUENCE [MRNA]</scope>
    <scope>FUNCTION</scope>
    <scope>TISSUE SPECIFICITY</scope>
</reference>
<reference key="2">
    <citation type="journal article" date="2000" name="Gene">
        <title>Gene structure and promoter for Crad2 encoding mouse cis-retinol/3-hydroxysterol short-chain dehydrogenase isozyme.</title>
        <authorList>
            <person name="Tomita K."/>
            <person name="Sato M."/>
            <person name="Kajiwara K."/>
            <person name="Tanaka M."/>
            <person name="Tamiya G."/>
            <person name="Makino S."/>
            <person name="Tomizawa M."/>
            <person name="Mizutani A."/>
            <person name="Kuwano Y."/>
            <person name="Shiina T."/>
            <person name="Ishii H."/>
            <person name="Kimura M."/>
        </authorList>
    </citation>
    <scope>NUCLEOTIDE SEQUENCE [GENOMIC DNA]</scope>
    <source>
        <strain>129/Ola</strain>
        <tissue>Liver</tissue>
    </source>
</reference>
<reference key="3">
    <citation type="journal article" date="2004" name="Genome Res.">
        <title>The status, quality, and expansion of the NIH full-length cDNA project: the Mammalian Gene Collection (MGC).</title>
        <authorList>
            <consortium name="The MGC Project Team"/>
        </authorList>
    </citation>
    <scope>NUCLEOTIDE SEQUENCE [LARGE SCALE MRNA]</scope>
    <source>
        <strain>FVB/N</strain>
        <tissue>Liver</tissue>
    </source>
</reference>
<reference key="4">
    <citation type="journal article" date="2010" name="Cell">
        <title>A tissue-specific atlas of mouse protein phosphorylation and expression.</title>
        <authorList>
            <person name="Huttlin E.L."/>
            <person name="Jedrychowski M.P."/>
            <person name="Elias J.E."/>
            <person name="Goswami T."/>
            <person name="Rad R."/>
            <person name="Beausoleil S.A."/>
            <person name="Villen J."/>
            <person name="Haas W."/>
            <person name="Sowa M.E."/>
            <person name="Gygi S.P."/>
        </authorList>
    </citation>
    <scope>IDENTIFICATION BY MASS SPECTROMETRY [LARGE SCALE ANALYSIS]</scope>
    <source>
        <tissue>Liver</tissue>
    </source>
</reference>